<keyword id="KW-0067">ATP-binding</keyword>
<keyword id="KW-0496">Mitochondrion</keyword>
<keyword id="KW-0547">Nucleotide-binding</keyword>
<keyword id="KW-0346">Stress response</keyword>
<keyword id="KW-0809">Transit peptide</keyword>
<evidence type="ECO:0000250" key="1"/>
<evidence type="ECO:0000256" key="2">
    <source>
        <dbReference type="SAM" id="MobiDB-lite"/>
    </source>
</evidence>
<evidence type="ECO:0000305" key="3"/>
<reference key="1">
    <citation type="journal article" date="1992" name="Plant Mol. Biol.">
        <title>Characterisation of PHSP1, a cDNA encoding a mitochondrial HSP70 from Pisum sativum.</title>
        <authorList>
            <person name="Watts F.Z."/>
            <person name="Walters A.J."/>
            <person name="Moore A.L."/>
        </authorList>
    </citation>
    <scope>NUCLEOTIDE SEQUENCE [MRNA]</scope>
</reference>
<feature type="transit peptide" description="Mitochondrion" evidence="1">
    <location>
        <begin position="1"/>
        <end position="52"/>
    </location>
</feature>
<feature type="chain" id="PRO_0000013547" description="Heat shock 70 kDa protein, mitochondrial">
    <location>
        <begin position="53"/>
        <end position="675"/>
    </location>
</feature>
<feature type="region of interest" description="Disordered" evidence="2">
    <location>
        <begin position="639"/>
        <end position="675"/>
    </location>
</feature>
<feature type="compositionally biased region" description="Gly residues" evidence="2">
    <location>
        <begin position="649"/>
        <end position="661"/>
    </location>
</feature>
<feature type="compositionally biased region" description="Acidic residues" evidence="2">
    <location>
        <begin position="666"/>
        <end position="675"/>
    </location>
</feature>
<sequence>MAATLLRSLQRRNLSSSSVSAFRSLTGSTKTSYATHKLASLTRPFSSRPAGNDVIGIDLGTTNSCVSVMEGKNPKVIENSEGARTTPSVVAFNQKSELLVGTPAKRQAVTNPTNTLFGTKRLIGRRFDDAQTQKEMKMVPYKIVRAPNGDAWVEANGQQYSPSQIGAFVLTKIKETAEAYLGKTISKAVVTVPAYFNDAQRQATKDAGRIAGLDVQRIINEPTAAALSYGMNNKEGLIAVFDLGGGTFDVSILEISNGVFEVKATNGDTFLGGEDFDNALLDFLVSEFKRTESIDLAKDKLALQRLREAAEKAKIELSSTSQTEINLPFISADASGAKHLNITLTRSKFEALVNNLIERTKAPCKSCLKDANISIKDVDEVLLVGGMTRVPKVQQVVSEIFGKSPSKGVNPDEAVAMGAALQGGILRGDVKELLLLDVTPLSLGIETLGGIFTRLISRNTTIPTKKSQVFSTAADNQTQVGIKVLQGEREMAADNKSLGEFDLVGIPPAPRGLPQIEVTFDIDANGIVTVSAKDKSTGKEQQITIRSSGGLSDDEIDKMVKEAELHAQRDQERKALIDIRNSADTSIYSIEKSLAEYREKIPAEVAKEIEDAVSDLRTAMAGENADDIKAKLDAANKAVSKIGQHMSGGSSGGPSEGGSQGGEQAPEAEYEEVKK</sequence>
<organism>
    <name type="scientific">Pisum sativum</name>
    <name type="common">Garden pea</name>
    <name type="synonym">Lathyrus oleraceus</name>
    <dbReference type="NCBI Taxonomy" id="3888"/>
    <lineage>
        <taxon>Eukaryota</taxon>
        <taxon>Viridiplantae</taxon>
        <taxon>Streptophyta</taxon>
        <taxon>Embryophyta</taxon>
        <taxon>Tracheophyta</taxon>
        <taxon>Spermatophyta</taxon>
        <taxon>Magnoliopsida</taxon>
        <taxon>eudicotyledons</taxon>
        <taxon>Gunneridae</taxon>
        <taxon>Pentapetalae</taxon>
        <taxon>rosids</taxon>
        <taxon>fabids</taxon>
        <taxon>Fabales</taxon>
        <taxon>Fabaceae</taxon>
        <taxon>Papilionoideae</taxon>
        <taxon>50 kb inversion clade</taxon>
        <taxon>NPAAA clade</taxon>
        <taxon>Hologalegina</taxon>
        <taxon>IRL clade</taxon>
        <taxon>Fabeae</taxon>
        <taxon>Pisum</taxon>
    </lineage>
</organism>
<protein>
    <recommendedName>
        <fullName>Heat shock 70 kDa protein, mitochondrial</fullName>
    </recommendedName>
</protein>
<dbReference type="EMBL" id="X54739">
    <property type="protein sequence ID" value="CAA38536.1"/>
    <property type="molecule type" value="mRNA"/>
</dbReference>
<dbReference type="PIR" id="S19140">
    <property type="entry name" value="S19140"/>
</dbReference>
<dbReference type="SMR" id="P37900"/>
<dbReference type="IntAct" id="P37900">
    <property type="interactions" value="2"/>
</dbReference>
<dbReference type="MINT" id="P37900"/>
<dbReference type="GO" id="GO:0005739">
    <property type="term" value="C:mitochondrion"/>
    <property type="evidence" value="ECO:0007669"/>
    <property type="project" value="UniProtKB-SubCell"/>
</dbReference>
<dbReference type="GO" id="GO:0005524">
    <property type="term" value="F:ATP binding"/>
    <property type="evidence" value="ECO:0007669"/>
    <property type="project" value="UniProtKB-KW"/>
</dbReference>
<dbReference type="GO" id="GO:0140662">
    <property type="term" value="F:ATP-dependent protein folding chaperone"/>
    <property type="evidence" value="ECO:0007669"/>
    <property type="project" value="InterPro"/>
</dbReference>
<dbReference type="GO" id="GO:0051082">
    <property type="term" value="F:unfolded protein binding"/>
    <property type="evidence" value="ECO:0007669"/>
    <property type="project" value="InterPro"/>
</dbReference>
<dbReference type="CDD" id="cd11733">
    <property type="entry name" value="ASKHA_NBD_HSP70_HSPA9"/>
    <property type="match status" value="1"/>
</dbReference>
<dbReference type="FunFam" id="2.60.34.10:FF:000014">
    <property type="entry name" value="Chaperone protein DnaK HSP70"/>
    <property type="match status" value="1"/>
</dbReference>
<dbReference type="FunFam" id="3.30.420.40:FF:000020">
    <property type="entry name" value="Chaperone protein HscA homolog"/>
    <property type="match status" value="1"/>
</dbReference>
<dbReference type="FunFam" id="3.30.30.30:FF:000003">
    <property type="entry name" value="Heat shock protein 9"/>
    <property type="match status" value="1"/>
</dbReference>
<dbReference type="FunFam" id="1.20.1270.10:FF:000001">
    <property type="entry name" value="Molecular chaperone DnaK"/>
    <property type="match status" value="1"/>
</dbReference>
<dbReference type="FunFam" id="3.30.420.40:FF:000004">
    <property type="entry name" value="Molecular chaperone DnaK"/>
    <property type="match status" value="1"/>
</dbReference>
<dbReference type="FunFam" id="3.90.640.10:FF:000003">
    <property type="entry name" value="Molecular chaperone DnaK"/>
    <property type="match status" value="1"/>
</dbReference>
<dbReference type="Gene3D" id="1.20.1270.10">
    <property type="match status" value="1"/>
</dbReference>
<dbReference type="Gene3D" id="3.30.420.40">
    <property type="match status" value="2"/>
</dbReference>
<dbReference type="Gene3D" id="3.90.640.10">
    <property type="entry name" value="Actin, Chain A, domain 4"/>
    <property type="match status" value="1"/>
</dbReference>
<dbReference type="Gene3D" id="2.60.34.10">
    <property type="entry name" value="Substrate Binding Domain Of DNAk, Chain A, domain 1"/>
    <property type="match status" value="1"/>
</dbReference>
<dbReference type="HAMAP" id="MF_00332">
    <property type="entry name" value="DnaK"/>
    <property type="match status" value="1"/>
</dbReference>
<dbReference type="InterPro" id="IPR043129">
    <property type="entry name" value="ATPase_NBD"/>
</dbReference>
<dbReference type="InterPro" id="IPR012725">
    <property type="entry name" value="Chaperone_DnaK"/>
</dbReference>
<dbReference type="InterPro" id="IPR018181">
    <property type="entry name" value="Heat_shock_70_CS"/>
</dbReference>
<dbReference type="InterPro" id="IPR029048">
    <property type="entry name" value="HSP70_C_sf"/>
</dbReference>
<dbReference type="InterPro" id="IPR029047">
    <property type="entry name" value="HSP70_peptide-bd_sf"/>
</dbReference>
<dbReference type="InterPro" id="IPR013126">
    <property type="entry name" value="Hsp_70_fam"/>
</dbReference>
<dbReference type="NCBIfam" id="NF001413">
    <property type="entry name" value="PRK00290.1"/>
    <property type="match status" value="1"/>
</dbReference>
<dbReference type="NCBIfam" id="NF003520">
    <property type="entry name" value="PRK05183.1"/>
    <property type="match status" value="1"/>
</dbReference>
<dbReference type="NCBIfam" id="TIGR02350">
    <property type="entry name" value="prok_dnaK"/>
    <property type="match status" value="1"/>
</dbReference>
<dbReference type="PANTHER" id="PTHR19375">
    <property type="entry name" value="HEAT SHOCK PROTEIN 70KDA"/>
    <property type="match status" value="1"/>
</dbReference>
<dbReference type="Pfam" id="PF00012">
    <property type="entry name" value="HSP70"/>
    <property type="match status" value="1"/>
</dbReference>
<dbReference type="PRINTS" id="PR00301">
    <property type="entry name" value="HEATSHOCK70"/>
</dbReference>
<dbReference type="SUPFAM" id="SSF53067">
    <property type="entry name" value="Actin-like ATPase domain"/>
    <property type="match status" value="2"/>
</dbReference>
<dbReference type="SUPFAM" id="SSF100920">
    <property type="entry name" value="Heat shock protein 70kD (HSP70), peptide-binding domain"/>
    <property type="match status" value="1"/>
</dbReference>
<dbReference type="PROSITE" id="PS00297">
    <property type="entry name" value="HSP70_1"/>
    <property type="match status" value="1"/>
</dbReference>
<dbReference type="PROSITE" id="PS00329">
    <property type="entry name" value="HSP70_2"/>
    <property type="match status" value="1"/>
</dbReference>
<dbReference type="PROSITE" id="PS01036">
    <property type="entry name" value="HSP70_3"/>
    <property type="match status" value="1"/>
</dbReference>
<proteinExistence type="evidence at transcript level"/>
<comment type="subcellular location">
    <subcellularLocation>
        <location>Mitochondrion</location>
    </subcellularLocation>
</comment>
<comment type="similarity">
    <text evidence="3">Belongs to the heat shock protein 70 family.</text>
</comment>
<name>HSP7M_PEA</name>
<gene>
    <name type="primary">HSP1</name>
</gene>
<accession>P37900</accession>